<dbReference type="EC" id="3.1.1.29" evidence="1"/>
<dbReference type="EMBL" id="CP001019">
    <property type="protein sequence ID" value="ACJ17660.1"/>
    <property type="molecule type" value="Genomic_DNA"/>
</dbReference>
<dbReference type="RefSeq" id="WP_011996391.1">
    <property type="nucleotide sequence ID" value="NC_011527.1"/>
</dbReference>
<dbReference type="SMR" id="B6J330"/>
<dbReference type="KEGG" id="cbg:CbuG_0214"/>
<dbReference type="HOGENOM" id="CLU_062456_3_1_6"/>
<dbReference type="GO" id="GO:0005737">
    <property type="term" value="C:cytoplasm"/>
    <property type="evidence" value="ECO:0007669"/>
    <property type="project" value="UniProtKB-SubCell"/>
</dbReference>
<dbReference type="GO" id="GO:0004045">
    <property type="term" value="F:peptidyl-tRNA hydrolase activity"/>
    <property type="evidence" value="ECO:0007669"/>
    <property type="project" value="UniProtKB-UniRule"/>
</dbReference>
<dbReference type="GO" id="GO:0000049">
    <property type="term" value="F:tRNA binding"/>
    <property type="evidence" value="ECO:0007669"/>
    <property type="project" value="UniProtKB-UniRule"/>
</dbReference>
<dbReference type="GO" id="GO:0006515">
    <property type="term" value="P:protein quality control for misfolded or incompletely synthesized proteins"/>
    <property type="evidence" value="ECO:0007669"/>
    <property type="project" value="UniProtKB-UniRule"/>
</dbReference>
<dbReference type="GO" id="GO:0072344">
    <property type="term" value="P:rescue of stalled ribosome"/>
    <property type="evidence" value="ECO:0007669"/>
    <property type="project" value="UniProtKB-UniRule"/>
</dbReference>
<dbReference type="CDD" id="cd00462">
    <property type="entry name" value="PTH"/>
    <property type="match status" value="1"/>
</dbReference>
<dbReference type="FunFam" id="3.40.50.1470:FF:000001">
    <property type="entry name" value="Peptidyl-tRNA hydrolase"/>
    <property type="match status" value="1"/>
</dbReference>
<dbReference type="Gene3D" id="3.40.50.1470">
    <property type="entry name" value="Peptidyl-tRNA hydrolase"/>
    <property type="match status" value="1"/>
</dbReference>
<dbReference type="HAMAP" id="MF_00083">
    <property type="entry name" value="Pept_tRNA_hydro_bact"/>
    <property type="match status" value="1"/>
</dbReference>
<dbReference type="InterPro" id="IPR001328">
    <property type="entry name" value="Pept_tRNA_hydro"/>
</dbReference>
<dbReference type="InterPro" id="IPR018171">
    <property type="entry name" value="Pept_tRNA_hydro_CS"/>
</dbReference>
<dbReference type="InterPro" id="IPR036416">
    <property type="entry name" value="Pept_tRNA_hydro_sf"/>
</dbReference>
<dbReference type="NCBIfam" id="TIGR00447">
    <property type="entry name" value="pth"/>
    <property type="match status" value="1"/>
</dbReference>
<dbReference type="PANTHER" id="PTHR17224">
    <property type="entry name" value="PEPTIDYL-TRNA HYDROLASE"/>
    <property type="match status" value="1"/>
</dbReference>
<dbReference type="PANTHER" id="PTHR17224:SF1">
    <property type="entry name" value="PEPTIDYL-TRNA HYDROLASE"/>
    <property type="match status" value="1"/>
</dbReference>
<dbReference type="Pfam" id="PF01195">
    <property type="entry name" value="Pept_tRNA_hydro"/>
    <property type="match status" value="1"/>
</dbReference>
<dbReference type="SUPFAM" id="SSF53178">
    <property type="entry name" value="Peptidyl-tRNA hydrolase-like"/>
    <property type="match status" value="1"/>
</dbReference>
<dbReference type="PROSITE" id="PS01195">
    <property type="entry name" value="PEPT_TRNA_HYDROL_1"/>
    <property type="match status" value="1"/>
</dbReference>
<dbReference type="PROSITE" id="PS01196">
    <property type="entry name" value="PEPT_TRNA_HYDROL_2"/>
    <property type="match status" value="1"/>
</dbReference>
<feature type="chain" id="PRO_1000092933" description="Peptidyl-tRNA hydrolase">
    <location>
        <begin position="1"/>
        <end position="187"/>
    </location>
</feature>
<feature type="active site" description="Proton acceptor" evidence="1">
    <location>
        <position position="23"/>
    </location>
</feature>
<feature type="binding site" evidence="1">
    <location>
        <position position="18"/>
    </location>
    <ligand>
        <name>tRNA</name>
        <dbReference type="ChEBI" id="CHEBI:17843"/>
    </ligand>
</feature>
<feature type="binding site" evidence="1">
    <location>
        <position position="65"/>
    </location>
    <ligand>
        <name>tRNA</name>
        <dbReference type="ChEBI" id="CHEBI:17843"/>
    </ligand>
</feature>
<feature type="binding site" evidence="1">
    <location>
        <position position="67"/>
    </location>
    <ligand>
        <name>tRNA</name>
        <dbReference type="ChEBI" id="CHEBI:17843"/>
    </ligand>
</feature>
<feature type="binding site" evidence="1">
    <location>
        <position position="113"/>
    </location>
    <ligand>
        <name>tRNA</name>
        <dbReference type="ChEBI" id="CHEBI:17843"/>
    </ligand>
</feature>
<feature type="site" description="Discriminates between blocked and unblocked aminoacyl-tRNA" evidence="1">
    <location>
        <position position="13"/>
    </location>
</feature>
<feature type="site" description="Stabilizes the basic form of H active site to accept a proton" evidence="1">
    <location>
        <position position="92"/>
    </location>
</feature>
<evidence type="ECO:0000255" key="1">
    <source>
        <dbReference type="HAMAP-Rule" id="MF_00083"/>
    </source>
</evidence>
<comment type="function">
    <text evidence="1">Hydrolyzes ribosome-free peptidyl-tRNAs (with 1 or more amino acids incorporated), which drop off the ribosome during protein synthesis, or as a result of ribosome stalling.</text>
</comment>
<comment type="function">
    <text evidence="1">Catalyzes the release of premature peptidyl moieties from peptidyl-tRNA molecules trapped in stalled 50S ribosomal subunits, and thus maintains levels of free tRNAs and 50S ribosomes.</text>
</comment>
<comment type="catalytic activity">
    <reaction evidence="1">
        <text>an N-acyl-L-alpha-aminoacyl-tRNA + H2O = an N-acyl-L-amino acid + a tRNA + H(+)</text>
        <dbReference type="Rhea" id="RHEA:54448"/>
        <dbReference type="Rhea" id="RHEA-COMP:10123"/>
        <dbReference type="Rhea" id="RHEA-COMP:13883"/>
        <dbReference type="ChEBI" id="CHEBI:15377"/>
        <dbReference type="ChEBI" id="CHEBI:15378"/>
        <dbReference type="ChEBI" id="CHEBI:59874"/>
        <dbReference type="ChEBI" id="CHEBI:78442"/>
        <dbReference type="ChEBI" id="CHEBI:138191"/>
        <dbReference type="EC" id="3.1.1.29"/>
    </reaction>
</comment>
<comment type="subunit">
    <text evidence="1">Monomer.</text>
</comment>
<comment type="subcellular location">
    <subcellularLocation>
        <location evidence="1">Cytoplasm</location>
    </subcellularLocation>
</comment>
<comment type="similarity">
    <text evidence="1">Belongs to the PTH family.</text>
</comment>
<organism>
    <name type="scientific">Coxiella burnetii (strain CbuG_Q212)</name>
    <name type="common">Coxiella burnetii (strain Q212)</name>
    <dbReference type="NCBI Taxonomy" id="434923"/>
    <lineage>
        <taxon>Bacteria</taxon>
        <taxon>Pseudomonadati</taxon>
        <taxon>Pseudomonadota</taxon>
        <taxon>Gammaproteobacteria</taxon>
        <taxon>Legionellales</taxon>
        <taxon>Coxiellaceae</taxon>
        <taxon>Coxiella</taxon>
    </lineage>
</organism>
<proteinExistence type="inferred from homology"/>
<accession>B6J330</accession>
<sequence length="187" mass="20790">MSGGVKLIAGLGNPGDQYARTRHNVGAWFLETLAQQRNQSLAKENKFHGFVAKCNDYWLLKPTTFMNESGQAVAALARFYKIKPSEILIAHDELDFPAGDIRLKEGGGHGGHNGLRNIIQHLGSSDFYRLRIGINHPGHKDRVTPYVLSPPSENDRIAILAAIEKGLRLIPELVQGDFQKVMRELHS</sequence>
<gene>
    <name evidence="1" type="primary">pth</name>
    <name type="ordered locus">CbuG_0214</name>
</gene>
<reference key="1">
    <citation type="journal article" date="2009" name="Infect. Immun.">
        <title>Comparative genomics reveal extensive transposon-mediated genomic plasticity and diversity among potential effector proteins within the genus Coxiella.</title>
        <authorList>
            <person name="Beare P.A."/>
            <person name="Unsworth N."/>
            <person name="Andoh M."/>
            <person name="Voth D.E."/>
            <person name="Omsland A."/>
            <person name="Gilk S.D."/>
            <person name="Williams K.P."/>
            <person name="Sobral B.W."/>
            <person name="Kupko J.J. III"/>
            <person name="Porcella S.F."/>
            <person name="Samuel J.E."/>
            <person name="Heinzen R.A."/>
        </authorList>
    </citation>
    <scope>NUCLEOTIDE SEQUENCE [LARGE SCALE GENOMIC DNA]</scope>
    <source>
        <strain>CbuG_Q212</strain>
    </source>
</reference>
<name>PTH_COXB2</name>
<protein>
    <recommendedName>
        <fullName evidence="1">Peptidyl-tRNA hydrolase</fullName>
        <shortName evidence="1">Pth</shortName>
        <ecNumber evidence="1">3.1.1.29</ecNumber>
    </recommendedName>
</protein>
<keyword id="KW-0963">Cytoplasm</keyword>
<keyword id="KW-0378">Hydrolase</keyword>
<keyword id="KW-0694">RNA-binding</keyword>
<keyword id="KW-0820">tRNA-binding</keyword>